<proteinExistence type="inferred from homology"/>
<gene>
    <name evidence="1" type="primary">argH</name>
    <name type="ordered locus">cbdbA1185</name>
</gene>
<name>ARLY_DEHMC</name>
<protein>
    <recommendedName>
        <fullName evidence="1">Argininosuccinate lyase</fullName>
        <shortName evidence="1">ASAL</shortName>
        <ecNumber evidence="1">4.3.2.1</ecNumber>
    </recommendedName>
    <alternativeName>
        <fullName evidence="1">Arginosuccinase</fullName>
    </alternativeName>
</protein>
<sequence length="461" mass="51212">MSHIRSRFSKPADELVVRYTTSLPFDWRLYKEDIKCSTAHARMLSKQGIISAEDSQSIINGLNTILTEIETGSFVFKPETEDIHMAIEGRLFELIGEAAGRLHTARSRNDQVATDVHLFVKNACDETINKIRTLQGALLEQAEAHPQTALPGYTHMQIAQPVLLPHHLLAYFEMLERDCGRFTDARKRADVMPLGSGALAGVPYPLDREMVAKELGFSAISQNSLDAVSERDFILEYLSDAAICQMHLSRLSEEMVIWSSAEYAFVELDDAYTTGSSIMPQKKNPDVAELCRGKTGRVYGSLNTMLTVMKGLPLSYNRDLQEDKEPLFDCVDTLGDSLEVFAGMIKTAKFKPERMLRALEKGYVLATDIADYLVGKGESFRNSHGIVARLVSYAVAQNKTFGELSLAEYRQFSNLFEKDIYAVDIKSALNARNLPGGTAPKQIAQAIARAKKILAEAGVKN</sequence>
<dbReference type="EC" id="4.3.2.1" evidence="1"/>
<dbReference type="EMBL" id="AJ965256">
    <property type="protein sequence ID" value="CAI83268.1"/>
    <property type="molecule type" value="Genomic_DNA"/>
</dbReference>
<dbReference type="RefSeq" id="WP_011309619.1">
    <property type="nucleotide sequence ID" value="NC_007356.1"/>
</dbReference>
<dbReference type="SMR" id="Q3ZYF9"/>
<dbReference type="KEGG" id="deh:cbdbA1185"/>
<dbReference type="HOGENOM" id="CLU_027272_2_3_0"/>
<dbReference type="UniPathway" id="UPA00068">
    <property type="reaction ID" value="UER00114"/>
</dbReference>
<dbReference type="Proteomes" id="UP000000433">
    <property type="component" value="Chromosome"/>
</dbReference>
<dbReference type="GO" id="GO:0005829">
    <property type="term" value="C:cytosol"/>
    <property type="evidence" value="ECO:0007669"/>
    <property type="project" value="TreeGrafter"/>
</dbReference>
<dbReference type="GO" id="GO:0004056">
    <property type="term" value="F:argininosuccinate lyase activity"/>
    <property type="evidence" value="ECO:0007669"/>
    <property type="project" value="UniProtKB-UniRule"/>
</dbReference>
<dbReference type="GO" id="GO:0042450">
    <property type="term" value="P:arginine biosynthetic process via ornithine"/>
    <property type="evidence" value="ECO:0007669"/>
    <property type="project" value="InterPro"/>
</dbReference>
<dbReference type="GO" id="GO:0006526">
    <property type="term" value="P:L-arginine biosynthetic process"/>
    <property type="evidence" value="ECO:0007669"/>
    <property type="project" value="UniProtKB-UniRule"/>
</dbReference>
<dbReference type="CDD" id="cd01359">
    <property type="entry name" value="Argininosuccinate_lyase"/>
    <property type="match status" value="1"/>
</dbReference>
<dbReference type="FunFam" id="1.10.275.10:FF:000002">
    <property type="entry name" value="Argininosuccinate lyase"/>
    <property type="match status" value="1"/>
</dbReference>
<dbReference type="FunFam" id="1.10.40.30:FF:000001">
    <property type="entry name" value="Argininosuccinate lyase"/>
    <property type="match status" value="1"/>
</dbReference>
<dbReference type="FunFam" id="1.20.200.10:FF:000015">
    <property type="entry name" value="argininosuccinate lyase isoform X2"/>
    <property type="match status" value="1"/>
</dbReference>
<dbReference type="Gene3D" id="1.10.40.30">
    <property type="entry name" value="Fumarase/aspartase (C-terminal domain)"/>
    <property type="match status" value="1"/>
</dbReference>
<dbReference type="Gene3D" id="1.20.200.10">
    <property type="entry name" value="Fumarase/aspartase (Central domain)"/>
    <property type="match status" value="1"/>
</dbReference>
<dbReference type="Gene3D" id="1.10.275.10">
    <property type="entry name" value="Fumarase/aspartase (N-terminal domain)"/>
    <property type="match status" value="1"/>
</dbReference>
<dbReference type="HAMAP" id="MF_00006">
    <property type="entry name" value="Arg_succ_lyase"/>
    <property type="match status" value="1"/>
</dbReference>
<dbReference type="InterPro" id="IPR029419">
    <property type="entry name" value="Arg_succ_lyase_C"/>
</dbReference>
<dbReference type="InterPro" id="IPR009049">
    <property type="entry name" value="Argininosuccinate_lyase"/>
</dbReference>
<dbReference type="InterPro" id="IPR024083">
    <property type="entry name" value="Fumarase/histidase_N"/>
</dbReference>
<dbReference type="InterPro" id="IPR020557">
    <property type="entry name" value="Fumarate_lyase_CS"/>
</dbReference>
<dbReference type="InterPro" id="IPR000362">
    <property type="entry name" value="Fumarate_lyase_fam"/>
</dbReference>
<dbReference type="InterPro" id="IPR022761">
    <property type="entry name" value="Fumarate_lyase_N"/>
</dbReference>
<dbReference type="InterPro" id="IPR008948">
    <property type="entry name" value="L-Aspartase-like"/>
</dbReference>
<dbReference type="NCBIfam" id="TIGR00838">
    <property type="entry name" value="argH"/>
    <property type="match status" value="1"/>
</dbReference>
<dbReference type="PANTHER" id="PTHR43814">
    <property type="entry name" value="ARGININOSUCCINATE LYASE"/>
    <property type="match status" value="1"/>
</dbReference>
<dbReference type="PANTHER" id="PTHR43814:SF1">
    <property type="entry name" value="ARGININOSUCCINATE LYASE"/>
    <property type="match status" value="1"/>
</dbReference>
<dbReference type="Pfam" id="PF14698">
    <property type="entry name" value="ASL_C2"/>
    <property type="match status" value="1"/>
</dbReference>
<dbReference type="Pfam" id="PF00206">
    <property type="entry name" value="Lyase_1"/>
    <property type="match status" value="1"/>
</dbReference>
<dbReference type="PRINTS" id="PR00145">
    <property type="entry name" value="ARGSUCLYASE"/>
</dbReference>
<dbReference type="PRINTS" id="PR00149">
    <property type="entry name" value="FUMRATELYASE"/>
</dbReference>
<dbReference type="SUPFAM" id="SSF48557">
    <property type="entry name" value="L-aspartase-like"/>
    <property type="match status" value="1"/>
</dbReference>
<dbReference type="PROSITE" id="PS00163">
    <property type="entry name" value="FUMARATE_LYASES"/>
    <property type="match status" value="1"/>
</dbReference>
<organism>
    <name type="scientific">Dehalococcoides mccartyi (strain CBDB1)</name>
    <dbReference type="NCBI Taxonomy" id="255470"/>
    <lineage>
        <taxon>Bacteria</taxon>
        <taxon>Bacillati</taxon>
        <taxon>Chloroflexota</taxon>
        <taxon>Dehalococcoidia</taxon>
        <taxon>Dehalococcoidales</taxon>
        <taxon>Dehalococcoidaceae</taxon>
        <taxon>Dehalococcoides</taxon>
    </lineage>
</organism>
<comment type="catalytic activity">
    <reaction evidence="1">
        <text>2-(N(omega)-L-arginino)succinate = fumarate + L-arginine</text>
        <dbReference type="Rhea" id="RHEA:24020"/>
        <dbReference type="ChEBI" id="CHEBI:29806"/>
        <dbReference type="ChEBI" id="CHEBI:32682"/>
        <dbReference type="ChEBI" id="CHEBI:57472"/>
        <dbReference type="EC" id="4.3.2.1"/>
    </reaction>
</comment>
<comment type="pathway">
    <text evidence="1">Amino-acid biosynthesis; L-arginine biosynthesis; L-arginine from L-ornithine and carbamoyl phosphate: step 3/3.</text>
</comment>
<comment type="subcellular location">
    <subcellularLocation>
        <location evidence="1">Cytoplasm</location>
    </subcellularLocation>
</comment>
<comment type="similarity">
    <text evidence="1">Belongs to the lyase 1 family. Argininosuccinate lyase subfamily.</text>
</comment>
<accession>Q3ZYF9</accession>
<reference key="1">
    <citation type="journal article" date="2005" name="Nat. Biotechnol.">
        <title>Genome sequence of the chlorinated compound-respiring bacterium Dehalococcoides species strain CBDB1.</title>
        <authorList>
            <person name="Kube M."/>
            <person name="Beck A."/>
            <person name="Zinder S.H."/>
            <person name="Kuhl H."/>
            <person name="Reinhardt R."/>
            <person name="Adrian L."/>
        </authorList>
    </citation>
    <scope>NUCLEOTIDE SEQUENCE [LARGE SCALE GENOMIC DNA]</scope>
    <source>
        <strain>CBDB1</strain>
    </source>
</reference>
<feature type="chain" id="PRO_0000240725" description="Argininosuccinate lyase">
    <location>
        <begin position="1"/>
        <end position="461"/>
    </location>
</feature>
<evidence type="ECO:0000255" key="1">
    <source>
        <dbReference type="HAMAP-Rule" id="MF_00006"/>
    </source>
</evidence>
<keyword id="KW-0028">Amino-acid biosynthesis</keyword>
<keyword id="KW-0055">Arginine biosynthesis</keyword>
<keyword id="KW-0963">Cytoplasm</keyword>
<keyword id="KW-0456">Lyase</keyword>